<protein>
    <recommendedName>
        <fullName>Uncharacterized protein YbgS</fullName>
    </recommendedName>
</protein>
<name>YBGS_SALTI</name>
<feature type="signal peptide" evidence="1">
    <location>
        <begin position="1"/>
        <end position="24"/>
    </location>
</feature>
<feature type="chain" id="PRO_0000013810" description="Uncharacterized protein YbgS">
    <location>
        <begin position="25"/>
        <end position="128"/>
    </location>
</feature>
<feature type="region of interest" description="Disordered" evidence="2">
    <location>
        <begin position="24"/>
        <end position="128"/>
    </location>
</feature>
<feature type="compositionally biased region" description="Low complexity" evidence="2">
    <location>
        <begin position="24"/>
        <end position="44"/>
    </location>
</feature>
<feature type="compositionally biased region" description="Low complexity" evidence="2">
    <location>
        <begin position="52"/>
        <end position="70"/>
    </location>
</feature>
<feature type="compositionally biased region" description="Polar residues" evidence="2">
    <location>
        <begin position="71"/>
        <end position="82"/>
    </location>
</feature>
<feature type="compositionally biased region" description="Basic and acidic residues" evidence="2">
    <location>
        <begin position="85"/>
        <end position="110"/>
    </location>
</feature>
<feature type="compositionally biased region" description="Polar residues" evidence="2">
    <location>
        <begin position="113"/>
        <end position="128"/>
    </location>
</feature>
<reference key="1">
    <citation type="journal article" date="2001" name="Nature">
        <title>Complete genome sequence of a multiple drug resistant Salmonella enterica serovar Typhi CT18.</title>
        <authorList>
            <person name="Parkhill J."/>
            <person name="Dougan G."/>
            <person name="James K.D."/>
            <person name="Thomson N.R."/>
            <person name="Pickard D."/>
            <person name="Wain J."/>
            <person name="Churcher C.M."/>
            <person name="Mungall K.L."/>
            <person name="Bentley S.D."/>
            <person name="Holden M.T.G."/>
            <person name="Sebaihia M."/>
            <person name="Baker S."/>
            <person name="Basham D."/>
            <person name="Brooks K."/>
            <person name="Chillingworth T."/>
            <person name="Connerton P."/>
            <person name="Cronin A."/>
            <person name="Davis P."/>
            <person name="Davies R.M."/>
            <person name="Dowd L."/>
            <person name="White N."/>
            <person name="Farrar J."/>
            <person name="Feltwell T."/>
            <person name="Hamlin N."/>
            <person name="Haque A."/>
            <person name="Hien T.T."/>
            <person name="Holroyd S."/>
            <person name="Jagels K."/>
            <person name="Krogh A."/>
            <person name="Larsen T.S."/>
            <person name="Leather S."/>
            <person name="Moule S."/>
            <person name="O'Gaora P."/>
            <person name="Parry C."/>
            <person name="Quail M.A."/>
            <person name="Rutherford K.M."/>
            <person name="Simmonds M."/>
            <person name="Skelton J."/>
            <person name="Stevens K."/>
            <person name="Whitehead S."/>
            <person name="Barrell B.G."/>
        </authorList>
    </citation>
    <scope>NUCLEOTIDE SEQUENCE [LARGE SCALE GENOMIC DNA]</scope>
    <source>
        <strain>CT18</strain>
    </source>
</reference>
<reference key="2">
    <citation type="journal article" date="2003" name="J. Bacteriol.">
        <title>Comparative genomics of Salmonella enterica serovar Typhi strains Ty2 and CT18.</title>
        <authorList>
            <person name="Deng W."/>
            <person name="Liou S.-R."/>
            <person name="Plunkett G. III"/>
            <person name="Mayhew G.F."/>
            <person name="Rose D.J."/>
            <person name="Burland V."/>
            <person name="Kodoyianni V."/>
            <person name="Schwartz D.C."/>
            <person name="Blattner F.R."/>
        </authorList>
    </citation>
    <scope>NUCLEOTIDE SEQUENCE [LARGE SCALE GENOMIC DNA]</scope>
    <source>
        <strain>ATCC 700931 / Ty2</strain>
    </source>
</reference>
<evidence type="ECO:0000255" key="1"/>
<evidence type="ECO:0000256" key="2">
    <source>
        <dbReference type="SAM" id="MobiDB-lite"/>
    </source>
</evidence>
<keyword id="KW-0732">Signal</keyword>
<gene>
    <name type="primary">ybgS</name>
    <name type="ordered locus">STY0800</name>
    <name type="ordered locus">t2119</name>
</gene>
<dbReference type="EMBL" id="AL513382">
    <property type="protein sequence ID" value="CAD05216.1"/>
    <property type="molecule type" value="Genomic_DNA"/>
</dbReference>
<dbReference type="EMBL" id="AE014613">
    <property type="protein sequence ID" value="AAO69736.1"/>
    <property type="molecule type" value="Genomic_DNA"/>
</dbReference>
<dbReference type="RefSeq" id="NP_455310.1">
    <property type="nucleotide sequence ID" value="NC_003198.1"/>
</dbReference>
<dbReference type="RefSeq" id="WP_000784380.1">
    <property type="nucleotide sequence ID" value="NZ_WSUR01000021.1"/>
</dbReference>
<dbReference type="STRING" id="220341.gene:17584806"/>
<dbReference type="KEGG" id="stt:t2119"/>
<dbReference type="KEGG" id="sty:STY0800"/>
<dbReference type="PATRIC" id="fig|220341.7.peg.805"/>
<dbReference type="eggNOG" id="ENOG5030ZXQ">
    <property type="taxonomic scope" value="Bacteria"/>
</dbReference>
<dbReference type="HOGENOM" id="CLU_161896_0_0_6"/>
<dbReference type="OMA" id="MTKDEVH"/>
<dbReference type="OrthoDB" id="6548960at2"/>
<dbReference type="Proteomes" id="UP000000541">
    <property type="component" value="Chromosome"/>
</dbReference>
<dbReference type="Proteomes" id="UP000002670">
    <property type="component" value="Chromosome"/>
</dbReference>
<dbReference type="InterPro" id="IPR020363">
    <property type="entry name" value="Uncharacterised_YbgS"/>
</dbReference>
<dbReference type="Pfam" id="PF13985">
    <property type="entry name" value="YbgS"/>
    <property type="match status" value="1"/>
</dbReference>
<accession>P64438</accession>
<accession>Q8XG68</accession>
<sequence>MKMTKLTTLLLTATLGLASGAALAAESNAQSSNGQANSAANAGQVAPDARQNVAPNDVNNNDINTNGNTNSTMQHPDGSTMNHDGMTKDEEHKNTMCKDGRCPDINKKVETGNGVNNDVNTKTDGTTQ</sequence>
<organism>
    <name type="scientific">Salmonella typhi</name>
    <dbReference type="NCBI Taxonomy" id="90370"/>
    <lineage>
        <taxon>Bacteria</taxon>
        <taxon>Pseudomonadati</taxon>
        <taxon>Pseudomonadota</taxon>
        <taxon>Gammaproteobacteria</taxon>
        <taxon>Enterobacterales</taxon>
        <taxon>Enterobacteriaceae</taxon>
        <taxon>Salmonella</taxon>
    </lineage>
</organism>
<proteinExistence type="inferred from homology"/>